<sequence>MEICKRVEQVDFEKMNGLIPTIVQDYKTKEVLMLAYMSKESLNKTLEDNTTWFYSRSRDELWNKGATSGHFQYVKEIKIDCDNDTILILAEQVGAACHTGNRTCFYRDL</sequence>
<gene>
    <name evidence="1" type="primary">hisI</name>
    <name type="ordered locus">Cbei_1323</name>
</gene>
<evidence type="ECO:0000255" key="1">
    <source>
        <dbReference type="HAMAP-Rule" id="MF_01021"/>
    </source>
</evidence>
<protein>
    <recommendedName>
        <fullName evidence="1">Phosphoribosyl-AMP cyclohydrolase</fullName>
        <shortName evidence="1">PRA-CH</shortName>
        <ecNumber evidence="1">3.5.4.19</ecNumber>
    </recommendedName>
</protein>
<accession>A6LT23</accession>
<reference key="1">
    <citation type="submission" date="2007-06" db="EMBL/GenBank/DDBJ databases">
        <title>Complete sequence of Clostridium beijerinckii NCIMB 8052.</title>
        <authorList>
            <consortium name="US DOE Joint Genome Institute"/>
            <person name="Copeland A."/>
            <person name="Lucas S."/>
            <person name="Lapidus A."/>
            <person name="Barry K."/>
            <person name="Detter J.C."/>
            <person name="Glavina del Rio T."/>
            <person name="Hammon N."/>
            <person name="Israni S."/>
            <person name="Dalin E."/>
            <person name="Tice H."/>
            <person name="Pitluck S."/>
            <person name="Sims D."/>
            <person name="Brettin T."/>
            <person name="Bruce D."/>
            <person name="Tapia R."/>
            <person name="Brainard J."/>
            <person name="Schmutz J."/>
            <person name="Larimer F."/>
            <person name="Land M."/>
            <person name="Hauser L."/>
            <person name="Kyrpides N."/>
            <person name="Mikhailova N."/>
            <person name="Bennet G."/>
            <person name="Cann I."/>
            <person name="Chen J.-S."/>
            <person name="Contreras A.L."/>
            <person name="Jones D."/>
            <person name="Kashket E."/>
            <person name="Mitchell W."/>
            <person name="Stoddard S."/>
            <person name="Schwarz W."/>
            <person name="Qureshi N."/>
            <person name="Young M."/>
            <person name="Shi Z."/>
            <person name="Ezeji T."/>
            <person name="White B."/>
            <person name="Blaschek H."/>
            <person name="Richardson P."/>
        </authorList>
    </citation>
    <scope>NUCLEOTIDE SEQUENCE [LARGE SCALE GENOMIC DNA]</scope>
    <source>
        <strain>ATCC 51743 / NCIMB 8052</strain>
    </source>
</reference>
<dbReference type="EC" id="3.5.4.19" evidence="1"/>
<dbReference type="EMBL" id="CP000721">
    <property type="protein sequence ID" value="ABR33503.1"/>
    <property type="molecule type" value="Genomic_DNA"/>
</dbReference>
<dbReference type="RefSeq" id="WP_011968657.1">
    <property type="nucleotide sequence ID" value="NC_009617.1"/>
</dbReference>
<dbReference type="SMR" id="A6LT23"/>
<dbReference type="GeneID" id="66344315"/>
<dbReference type="KEGG" id="cbe:Cbei_1323"/>
<dbReference type="eggNOG" id="COG0139">
    <property type="taxonomic scope" value="Bacteria"/>
</dbReference>
<dbReference type="HOGENOM" id="CLU_048577_5_3_9"/>
<dbReference type="UniPathway" id="UPA00031">
    <property type="reaction ID" value="UER00008"/>
</dbReference>
<dbReference type="Proteomes" id="UP000000565">
    <property type="component" value="Chromosome"/>
</dbReference>
<dbReference type="GO" id="GO:0005737">
    <property type="term" value="C:cytoplasm"/>
    <property type="evidence" value="ECO:0007669"/>
    <property type="project" value="UniProtKB-SubCell"/>
</dbReference>
<dbReference type="GO" id="GO:0000287">
    <property type="term" value="F:magnesium ion binding"/>
    <property type="evidence" value="ECO:0007669"/>
    <property type="project" value="UniProtKB-UniRule"/>
</dbReference>
<dbReference type="GO" id="GO:0004635">
    <property type="term" value="F:phosphoribosyl-AMP cyclohydrolase activity"/>
    <property type="evidence" value="ECO:0007669"/>
    <property type="project" value="UniProtKB-UniRule"/>
</dbReference>
<dbReference type="GO" id="GO:0008270">
    <property type="term" value="F:zinc ion binding"/>
    <property type="evidence" value="ECO:0007669"/>
    <property type="project" value="UniProtKB-UniRule"/>
</dbReference>
<dbReference type="GO" id="GO:0000105">
    <property type="term" value="P:L-histidine biosynthetic process"/>
    <property type="evidence" value="ECO:0007669"/>
    <property type="project" value="UniProtKB-UniRule"/>
</dbReference>
<dbReference type="FunFam" id="3.10.20.810:FF:000001">
    <property type="entry name" value="Histidine biosynthesis bifunctional protein HisIE"/>
    <property type="match status" value="1"/>
</dbReference>
<dbReference type="Gene3D" id="3.10.20.810">
    <property type="entry name" value="Phosphoribosyl-AMP cyclohydrolase"/>
    <property type="match status" value="1"/>
</dbReference>
<dbReference type="HAMAP" id="MF_01021">
    <property type="entry name" value="HisI"/>
    <property type="match status" value="1"/>
</dbReference>
<dbReference type="InterPro" id="IPR026660">
    <property type="entry name" value="PRA-CH"/>
</dbReference>
<dbReference type="InterPro" id="IPR002496">
    <property type="entry name" value="PRib_AMP_CycHydrolase_dom"/>
</dbReference>
<dbReference type="InterPro" id="IPR038019">
    <property type="entry name" value="PRib_AMP_CycHydrolase_sf"/>
</dbReference>
<dbReference type="NCBIfam" id="NF000768">
    <property type="entry name" value="PRK00051.1"/>
    <property type="match status" value="1"/>
</dbReference>
<dbReference type="PANTHER" id="PTHR42945">
    <property type="entry name" value="HISTIDINE BIOSYNTHESIS BIFUNCTIONAL PROTEIN"/>
    <property type="match status" value="1"/>
</dbReference>
<dbReference type="PANTHER" id="PTHR42945:SF1">
    <property type="entry name" value="HISTIDINE BIOSYNTHESIS BIFUNCTIONAL PROTEIN HIS7"/>
    <property type="match status" value="1"/>
</dbReference>
<dbReference type="Pfam" id="PF01502">
    <property type="entry name" value="PRA-CH"/>
    <property type="match status" value="1"/>
</dbReference>
<dbReference type="SUPFAM" id="SSF141734">
    <property type="entry name" value="HisI-like"/>
    <property type="match status" value="1"/>
</dbReference>
<keyword id="KW-0028">Amino-acid biosynthesis</keyword>
<keyword id="KW-0963">Cytoplasm</keyword>
<keyword id="KW-0368">Histidine biosynthesis</keyword>
<keyword id="KW-0378">Hydrolase</keyword>
<keyword id="KW-0460">Magnesium</keyword>
<keyword id="KW-0479">Metal-binding</keyword>
<keyword id="KW-0862">Zinc</keyword>
<feature type="chain" id="PRO_1000084178" description="Phosphoribosyl-AMP cyclohydrolase">
    <location>
        <begin position="1"/>
        <end position="109"/>
    </location>
</feature>
<feature type="binding site" evidence="1">
    <location>
        <position position="80"/>
    </location>
    <ligand>
        <name>Mg(2+)</name>
        <dbReference type="ChEBI" id="CHEBI:18420"/>
    </ligand>
</feature>
<feature type="binding site" evidence="1">
    <location>
        <position position="81"/>
    </location>
    <ligand>
        <name>Zn(2+)</name>
        <dbReference type="ChEBI" id="CHEBI:29105"/>
        <note>ligand shared between dimeric partners</note>
    </ligand>
</feature>
<feature type="binding site" evidence="1">
    <location>
        <position position="82"/>
    </location>
    <ligand>
        <name>Mg(2+)</name>
        <dbReference type="ChEBI" id="CHEBI:18420"/>
    </ligand>
</feature>
<feature type="binding site" evidence="1">
    <location>
        <position position="84"/>
    </location>
    <ligand>
        <name>Mg(2+)</name>
        <dbReference type="ChEBI" id="CHEBI:18420"/>
    </ligand>
</feature>
<feature type="binding site" evidence="1">
    <location>
        <position position="97"/>
    </location>
    <ligand>
        <name>Zn(2+)</name>
        <dbReference type="ChEBI" id="CHEBI:29105"/>
        <note>ligand shared between dimeric partners</note>
    </ligand>
</feature>
<feature type="binding site" evidence="1">
    <location>
        <position position="104"/>
    </location>
    <ligand>
        <name>Zn(2+)</name>
        <dbReference type="ChEBI" id="CHEBI:29105"/>
        <note>ligand shared between dimeric partners</note>
    </ligand>
</feature>
<comment type="function">
    <text evidence="1">Catalyzes the hydrolysis of the adenine ring of phosphoribosyl-AMP.</text>
</comment>
<comment type="catalytic activity">
    <reaction evidence="1">
        <text>1-(5-phospho-beta-D-ribosyl)-5'-AMP + H2O = 1-(5-phospho-beta-D-ribosyl)-5-[(5-phospho-beta-D-ribosylamino)methylideneamino]imidazole-4-carboxamide</text>
        <dbReference type="Rhea" id="RHEA:20049"/>
        <dbReference type="ChEBI" id="CHEBI:15377"/>
        <dbReference type="ChEBI" id="CHEBI:58435"/>
        <dbReference type="ChEBI" id="CHEBI:59457"/>
        <dbReference type="EC" id="3.5.4.19"/>
    </reaction>
</comment>
<comment type="cofactor">
    <cofactor evidence="1">
        <name>Mg(2+)</name>
        <dbReference type="ChEBI" id="CHEBI:18420"/>
    </cofactor>
    <text evidence="1">Binds 1 Mg(2+) ion per subunit.</text>
</comment>
<comment type="cofactor">
    <cofactor evidence="1">
        <name>Zn(2+)</name>
        <dbReference type="ChEBI" id="CHEBI:29105"/>
    </cofactor>
    <text evidence="1">Binds 1 zinc ion per subunit.</text>
</comment>
<comment type="pathway">
    <text evidence="1">Amino-acid biosynthesis; L-histidine biosynthesis; L-histidine from 5-phospho-alpha-D-ribose 1-diphosphate: step 3/9.</text>
</comment>
<comment type="subunit">
    <text evidence="1">Homodimer.</text>
</comment>
<comment type="subcellular location">
    <subcellularLocation>
        <location evidence="1">Cytoplasm</location>
    </subcellularLocation>
</comment>
<comment type="similarity">
    <text evidence="1">Belongs to the PRA-CH family.</text>
</comment>
<organism>
    <name type="scientific">Clostridium beijerinckii (strain ATCC 51743 / NCIMB 8052)</name>
    <name type="common">Clostridium acetobutylicum</name>
    <dbReference type="NCBI Taxonomy" id="290402"/>
    <lineage>
        <taxon>Bacteria</taxon>
        <taxon>Bacillati</taxon>
        <taxon>Bacillota</taxon>
        <taxon>Clostridia</taxon>
        <taxon>Eubacteriales</taxon>
        <taxon>Clostridiaceae</taxon>
        <taxon>Clostridium</taxon>
    </lineage>
</organism>
<proteinExistence type="inferred from homology"/>
<name>HIS3_CLOB8</name>